<reference evidence="4" key="1">
    <citation type="journal article" date="2005" name="Rapid Commun. Mass Spectrom.">
        <title>Electrospray ionization quadrupole time-of-flight and matrix-assisted laser desorption/ionization tandem time-of-flight mass spectrometric analyses to solve micro-heterogeneity in post-translationally modified peptides from Phoneutria nigriventer (Aranea, Ctenidae) venom.</title>
        <authorList>
            <person name="Pimenta A.M.C."/>
            <person name="Rates B."/>
            <person name="Bloch C. Jr."/>
            <person name="Gomes P.C."/>
            <person name="Santoro M.M."/>
            <person name="de Lima M.E."/>
            <person name="Richardson M."/>
            <person name="Cordeiro M.N."/>
        </authorList>
    </citation>
    <scope>PROTEIN SEQUENCE</scope>
    <scope>SUBCELLULAR LOCATION</scope>
    <scope>TISSUE SPECIFICITY</scope>
    <scope>MASS SPECTROMETRY</scope>
    <scope>PYROGLUTAMATE FORMATION AT GLN-1</scope>
    <source>
        <tissue evidence="2">Venom</tissue>
    </source>
</reference>
<name>TLP3_PHONI</name>
<dbReference type="GO" id="GO:0005576">
    <property type="term" value="C:extracellular region"/>
    <property type="evidence" value="ECO:0000314"/>
    <property type="project" value="UniProtKB"/>
</dbReference>
<organism>
    <name type="scientific">Phoneutria nigriventer</name>
    <name type="common">Brazilian armed spider</name>
    <name type="synonym">Ctenus nigriventer</name>
    <dbReference type="NCBI Taxonomy" id="6918"/>
    <lineage>
        <taxon>Eukaryota</taxon>
        <taxon>Metazoa</taxon>
        <taxon>Ecdysozoa</taxon>
        <taxon>Arthropoda</taxon>
        <taxon>Chelicerata</taxon>
        <taxon>Arachnida</taxon>
        <taxon>Araneae</taxon>
        <taxon>Araneomorphae</taxon>
        <taxon>Entelegynae</taxon>
        <taxon>Lycosoidea</taxon>
        <taxon>Ctenidae</taxon>
        <taxon>Phoneutria</taxon>
    </lineage>
</organism>
<proteinExistence type="evidence at protein level"/>
<feature type="peptide" id="PRO_0000402813" description="Tachykinin-like peptide-III" evidence="2">
    <location>
        <begin position="1"/>
        <end position="8"/>
    </location>
</feature>
<feature type="modified residue" description="Pyrrolidone carboxylic acid" evidence="2">
    <location>
        <position position="1"/>
    </location>
</feature>
<accession>P86300</accession>
<keyword id="KW-0903">Direct protein sequencing</keyword>
<keyword id="KW-0873">Pyrrolidone carboxylic acid</keyword>
<keyword id="KW-0964">Secreted</keyword>
<evidence type="ECO:0000255" key="1"/>
<evidence type="ECO:0000269" key="2">
    <source>
    </source>
</evidence>
<evidence type="ECO:0000303" key="3">
    <source>
    </source>
</evidence>
<evidence type="ECO:0000305" key="4"/>
<evidence type="ECO:0000305" key="5">
    <source>
    </source>
</evidence>
<comment type="subcellular location">
    <subcellularLocation>
        <location evidence="2">Secreted</location>
    </subcellularLocation>
</comment>
<comment type="tissue specificity">
    <text evidence="2">Expressed by the venom gland.</text>
</comment>
<comment type="mass spectrometry"/>
<comment type="similarity">
    <text evidence="1">Belongs to the tachykinin family.</text>
</comment>
<sequence>QKKDKKDR</sequence>
<protein>
    <recommendedName>
        <fullName evidence="5">Tachykinin-like peptide-III</fullName>
    </recommendedName>
    <alternativeName>
        <fullName evidence="3">P.nigriventer tachykinin peptides III</fullName>
        <shortName evidence="3">PnTkP-III</shortName>
    </alternativeName>
    <alternativeName>
        <fullName evidence="4">U29-ctenitoxin-Pn1c</fullName>
        <shortName evidence="4">U29-CNTX-Pn1c</shortName>
    </alternativeName>
</protein>